<feature type="chain" id="PRO_0000410392" description="High osmolarity signaling protein SHO1">
    <location>
        <begin position="1"/>
        <end position="281"/>
    </location>
</feature>
<feature type="topological domain" description="Cytoplasmic" evidence="2">
    <location>
        <begin position="1"/>
        <end position="12"/>
    </location>
</feature>
<feature type="transmembrane region" description="Helical" evidence="2">
    <location>
        <begin position="13"/>
        <end position="33"/>
    </location>
</feature>
<feature type="topological domain" description="Extracellular" evidence="2">
    <location>
        <begin position="34"/>
        <end position="42"/>
    </location>
</feature>
<feature type="transmembrane region" description="Helical" evidence="2">
    <location>
        <begin position="43"/>
        <end position="63"/>
    </location>
</feature>
<feature type="topological domain" description="Cytoplasmic" evidence="2">
    <location>
        <begin position="64"/>
        <end position="73"/>
    </location>
</feature>
<feature type="transmembrane region" description="Helical" evidence="2">
    <location>
        <begin position="74"/>
        <end position="94"/>
    </location>
</feature>
<feature type="topological domain" description="Extracellular" evidence="2">
    <location>
        <begin position="95"/>
        <end position="100"/>
    </location>
</feature>
<feature type="transmembrane region" description="Helical" evidence="2">
    <location>
        <begin position="101"/>
        <end position="121"/>
    </location>
</feature>
<feature type="topological domain" description="Cytoplasmic" evidence="2">
    <location>
        <begin position="122"/>
        <end position="281"/>
    </location>
</feature>
<feature type="domain" description="SH3" evidence="3">
    <location>
        <begin position="221"/>
        <end position="281"/>
    </location>
</feature>
<feature type="region of interest" description="Disordered" evidence="4">
    <location>
        <begin position="164"/>
        <end position="183"/>
    </location>
</feature>
<feature type="compositionally biased region" description="Polar residues" evidence="4">
    <location>
        <begin position="168"/>
        <end position="183"/>
    </location>
</feature>
<comment type="function">
    <text evidence="1">Plasma membrane osmosensor that activates the high osmolarity glycerol (HOG) MAPK signaling pathway in response to high osmolarity.</text>
</comment>
<comment type="subunit">
    <text evidence="1">Forms homooligomers.</text>
</comment>
<comment type="subcellular location">
    <subcellularLocation>
        <location evidence="1">Cell membrane</location>
        <topology evidence="1">Multi-pass membrane protein</topology>
    </subcellularLocation>
</comment>
<comment type="similarity">
    <text evidence="5">Belongs to the SHO1 family.</text>
</comment>
<proteinExistence type="inferred from homology"/>
<evidence type="ECO:0000250" key="1"/>
<evidence type="ECO:0000255" key="2"/>
<evidence type="ECO:0000255" key="3">
    <source>
        <dbReference type="PROSITE-ProRule" id="PRU00192"/>
    </source>
</evidence>
<evidence type="ECO:0000256" key="4">
    <source>
        <dbReference type="SAM" id="MobiDB-lite"/>
    </source>
</evidence>
<evidence type="ECO:0000305" key="5"/>
<organism>
    <name type="scientific">Meyerozyma guilliermondii (strain ATCC 6260 / CBS 566 / DSM 6381 / JCM 1539 / NBRC 10279 / NRRL Y-324)</name>
    <name type="common">Yeast</name>
    <name type="synonym">Candida guilliermondii</name>
    <dbReference type="NCBI Taxonomy" id="294746"/>
    <lineage>
        <taxon>Eukaryota</taxon>
        <taxon>Fungi</taxon>
        <taxon>Dikarya</taxon>
        <taxon>Ascomycota</taxon>
        <taxon>Saccharomycotina</taxon>
        <taxon>Pichiomycetes</taxon>
        <taxon>Debaryomycetaceae</taxon>
        <taxon>Meyerozyma</taxon>
    </lineage>
</organism>
<sequence>MAIRLSNFIGDPFAIATVSFGLIAWIVAIAGAGSSPQSHFPRFTWWGIVYELLIILLITFLYLTNTIELYKFTLVGLIAVAFVYTTNSANGLVYESNSGKLCCAAGCILLSMLNLIWIVYFGGHPESPTNQFIDSFSIKSHTHNHGQLSSDEKHDDDLRVAPAPEAFQDNNLRQSQNKTPYMSSSQLNGLENFSSADVRQSRDLTNSRRQTVIADEEDAPVFRYKARALYSYSANPEDINEISFTKDEILDVDDIDGKWWQARRATGEVGICPSNYVKLIE</sequence>
<dbReference type="EMBL" id="CH408162">
    <property type="protein sequence ID" value="EDK41696.2"/>
    <property type="molecule type" value="Genomic_DNA"/>
</dbReference>
<dbReference type="RefSeq" id="XP_001482031.1">
    <property type="nucleotide sequence ID" value="XM_001481981.1"/>
</dbReference>
<dbReference type="SMR" id="A5DR93"/>
<dbReference type="FunCoup" id="A5DR93">
    <property type="interactions" value="170"/>
</dbReference>
<dbReference type="STRING" id="294746.A5DR93"/>
<dbReference type="GeneID" id="5123978"/>
<dbReference type="KEGG" id="pgu:PGUG_05794"/>
<dbReference type="VEuPathDB" id="FungiDB:PGUG_05794"/>
<dbReference type="eggNOG" id="ENOG502QW7A">
    <property type="taxonomic scope" value="Eukaryota"/>
</dbReference>
<dbReference type="HOGENOM" id="CLU_043316_1_0_1"/>
<dbReference type="InParanoid" id="A5DR93"/>
<dbReference type="OMA" id="NIVWIFY"/>
<dbReference type="OrthoDB" id="5983572at2759"/>
<dbReference type="Proteomes" id="UP000001997">
    <property type="component" value="Unassembled WGS sequence"/>
</dbReference>
<dbReference type="GO" id="GO:0005886">
    <property type="term" value="C:plasma membrane"/>
    <property type="evidence" value="ECO:0007669"/>
    <property type="project" value="UniProtKB-SubCell"/>
</dbReference>
<dbReference type="GO" id="GO:0030833">
    <property type="term" value="P:regulation of actin filament polymerization"/>
    <property type="evidence" value="ECO:0007669"/>
    <property type="project" value="TreeGrafter"/>
</dbReference>
<dbReference type="CDD" id="cd11855">
    <property type="entry name" value="SH3_Sho1p"/>
    <property type="match status" value="1"/>
</dbReference>
<dbReference type="FunFam" id="2.30.30.40:FF:000213">
    <property type="entry name" value="High osmolarity signaling protein SHO1"/>
    <property type="match status" value="1"/>
</dbReference>
<dbReference type="Gene3D" id="2.30.30.40">
    <property type="entry name" value="SH3 Domains"/>
    <property type="match status" value="1"/>
</dbReference>
<dbReference type="InterPro" id="IPR036028">
    <property type="entry name" value="SH3-like_dom_sf"/>
</dbReference>
<dbReference type="InterPro" id="IPR001452">
    <property type="entry name" value="SH3_domain"/>
</dbReference>
<dbReference type="InterPro" id="IPR035522">
    <property type="entry name" value="Sho1_SH3"/>
</dbReference>
<dbReference type="PANTHER" id="PTHR15735">
    <property type="entry name" value="FCH AND DOUBLE SH3 DOMAINS PROTEIN"/>
    <property type="match status" value="1"/>
</dbReference>
<dbReference type="PANTHER" id="PTHR15735:SF20">
    <property type="entry name" value="HIGH OSMOLARITY SIGNALING PROTEIN SHO1"/>
    <property type="match status" value="1"/>
</dbReference>
<dbReference type="Pfam" id="PF00018">
    <property type="entry name" value="SH3_1"/>
    <property type="match status" value="1"/>
</dbReference>
<dbReference type="PRINTS" id="PR00452">
    <property type="entry name" value="SH3DOMAIN"/>
</dbReference>
<dbReference type="SMART" id="SM00326">
    <property type="entry name" value="SH3"/>
    <property type="match status" value="1"/>
</dbReference>
<dbReference type="SUPFAM" id="SSF50044">
    <property type="entry name" value="SH3-domain"/>
    <property type="match status" value="1"/>
</dbReference>
<dbReference type="PROSITE" id="PS50002">
    <property type="entry name" value="SH3"/>
    <property type="match status" value="1"/>
</dbReference>
<name>SHO1_PICGU</name>
<accession>A5DR93</accession>
<reference key="1">
    <citation type="journal article" date="2009" name="Nature">
        <title>Evolution of pathogenicity and sexual reproduction in eight Candida genomes.</title>
        <authorList>
            <person name="Butler G."/>
            <person name="Rasmussen M.D."/>
            <person name="Lin M.F."/>
            <person name="Santos M.A.S."/>
            <person name="Sakthikumar S."/>
            <person name="Munro C.A."/>
            <person name="Rheinbay E."/>
            <person name="Grabherr M."/>
            <person name="Forche A."/>
            <person name="Reedy J.L."/>
            <person name="Agrafioti I."/>
            <person name="Arnaud M.B."/>
            <person name="Bates S."/>
            <person name="Brown A.J.P."/>
            <person name="Brunke S."/>
            <person name="Costanzo M.C."/>
            <person name="Fitzpatrick D.A."/>
            <person name="de Groot P.W.J."/>
            <person name="Harris D."/>
            <person name="Hoyer L.L."/>
            <person name="Hube B."/>
            <person name="Klis F.M."/>
            <person name="Kodira C."/>
            <person name="Lennard N."/>
            <person name="Logue M.E."/>
            <person name="Martin R."/>
            <person name="Neiman A.M."/>
            <person name="Nikolaou E."/>
            <person name="Quail M.A."/>
            <person name="Quinn J."/>
            <person name="Santos M.C."/>
            <person name="Schmitzberger F.F."/>
            <person name="Sherlock G."/>
            <person name="Shah P."/>
            <person name="Silverstein K.A.T."/>
            <person name="Skrzypek M.S."/>
            <person name="Soll D."/>
            <person name="Staggs R."/>
            <person name="Stansfield I."/>
            <person name="Stumpf M.P.H."/>
            <person name="Sudbery P.E."/>
            <person name="Srikantha T."/>
            <person name="Zeng Q."/>
            <person name="Berman J."/>
            <person name="Berriman M."/>
            <person name="Heitman J."/>
            <person name="Gow N.A.R."/>
            <person name="Lorenz M.C."/>
            <person name="Birren B.W."/>
            <person name="Kellis M."/>
            <person name="Cuomo C.A."/>
        </authorList>
    </citation>
    <scope>NUCLEOTIDE SEQUENCE [LARGE SCALE GENOMIC DNA]</scope>
    <source>
        <strain>ATCC 6260 / CBS 566 / DSM 6381 / JCM 1539 / NBRC 10279 / NRRL Y-324</strain>
    </source>
</reference>
<gene>
    <name type="primary">SHO1</name>
    <name type="ORF">PGUG_05794</name>
</gene>
<keyword id="KW-1003">Cell membrane</keyword>
<keyword id="KW-0472">Membrane</keyword>
<keyword id="KW-1185">Reference proteome</keyword>
<keyword id="KW-0728">SH3 domain</keyword>
<keyword id="KW-0346">Stress response</keyword>
<keyword id="KW-0812">Transmembrane</keyword>
<keyword id="KW-1133">Transmembrane helix</keyword>
<protein>
    <recommendedName>
        <fullName>High osmolarity signaling protein SHO1</fullName>
    </recommendedName>
    <alternativeName>
        <fullName>Osmosensor SHO1</fullName>
    </alternativeName>
</protein>